<keyword id="KW-0963">Cytoplasm</keyword>
<keyword id="KW-0324">Glycolysis</keyword>
<keyword id="KW-0456">Lyase</keyword>
<keyword id="KW-0460">Magnesium</keyword>
<keyword id="KW-0479">Metal-binding</keyword>
<accession>O74286</accession>
<sequence>STITKVHARQIFDSRGNPTVEVEVTTDKGVFRAGVPSGASTGVHEALELRDGVKSDYLGKGVLKAVGNVNTIINEELVKANLSVVDQKAVDDFLIQLDGTENKEKLGANAILGVSLAVAKAGAAEKGVPFYVHIADLAGSKKPFVLPVPAFNVINGGSHAGNKLAMQEFMIMPTGAKSFSEAMKLGSEVYHTLKKVINEKYGQDATNVGDEGGFAPNIQDNQEGLELLVTAIEKAGYTGKIKVAMDCAASDFYKDGKYDLDFKNPNSDPSTYLTGQDLTDLYNSYAGKYPIVSIEDAFDQDDWENWAHMNASADYQLVGDDLTVTNPKRIATAVEKKACNALLLKVNQIGTLTESIQAALDSQKAGWGVMVSHRSGETEDTSIASIVVGLRTGQIKTGAPCRSERLAKYNELLRIEEELGDAAIYAGEHFRKAHDL</sequence>
<name>ENO_CUNEL</name>
<dbReference type="EC" id="4.2.1.11"/>
<dbReference type="EMBL" id="Y17298">
    <property type="protein sequence ID" value="CAA76735.1"/>
    <property type="molecule type" value="mRNA"/>
</dbReference>
<dbReference type="SMR" id="O74286"/>
<dbReference type="UniPathway" id="UPA00109">
    <property type="reaction ID" value="UER00187"/>
</dbReference>
<dbReference type="GO" id="GO:0000015">
    <property type="term" value="C:phosphopyruvate hydratase complex"/>
    <property type="evidence" value="ECO:0007669"/>
    <property type="project" value="InterPro"/>
</dbReference>
<dbReference type="GO" id="GO:0000287">
    <property type="term" value="F:magnesium ion binding"/>
    <property type="evidence" value="ECO:0007669"/>
    <property type="project" value="InterPro"/>
</dbReference>
<dbReference type="GO" id="GO:0004634">
    <property type="term" value="F:phosphopyruvate hydratase activity"/>
    <property type="evidence" value="ECO:0007669"/>
    <property type="project" value="UniProtKB-EC"/>
</dbReference>
<dbReference type="GO" id="GO:0006096">
    <property type="term" value="P:glycolytic process"/>
    <property type="evidence" value="ECO:0007669"/>
    <property type="project" value="UniProtKB-UniPathway"/>
</dbReference>
<dbReference type="CDD" id="cd03313">
    <property type="entry name" value="enolase"/>
    <property type="match status" value="1"/>
</dbReference>
<dbReference type="FunFam" id="3.30.390.10:FF:000001">
    <property type="entry name" value="Enolase"/>
    <property type="match status" value="1"/>
</dbReference>
<dbReference type="FunFam" id="3.20.20.120:FF:000002">
    <property type="entry name" value="Enolase 1"/>
    <property type="match status" value="1"/>
</dbReference>
<dbReference type="Gene3D" id="3.20.20.120">
    <property type="entry name" value="Enolase-like C-terminal domain"/>
    <property type="match status" value="1"/>
</dbReference>
<dbReference type="Gene3D" id="3.30.390.10">
    <property type="entry name" value="Enolase-like, N-terminal domain"/>
    <property type="match status" value="1"/>
</dbReference>
<dbReference type="HAMAP" id="MF_00318">
    <property type="entry name" value="Enolase"/>
    <property type="match status" value="1"/>
</dbReference>
<dbReference type="InterPro" id="IPR000941">
    <property type="entry name" value="Enolase"/>
</dbReference>
<dbReference type="InterPro" id="IPR036849">
    <property type="entry name" value="Enolase-like_C_sf"/>
</dbReference>
<dbReference type="InterPro" id="IPR029017">
    <property type="entry name" value="Enolase-like_N"/>
</dbReference>
<dbReference type="InterPro" id="IPR020810">
    <property type="entry name" value="Enolase_C"/>
</dbReference>
<dbReference type="InterPro" id="IPR020809">
    <property type="entry name" value="Enolase_CS"/>
</dbReference>
<dbReference type="InterPro" id="IPR020811">
    <property type="entry name" value="Enolase_N"/>
</dbReference>
<dbReference type="NCBIfam" id="TIGR01060">
    <property type="entry name" value="eno"/>
    <property type="match status" value="1"/>
</dbReference>
<dbReference type="PANTHER" id="PTHR11902">
    <property type="entry name" value="ENOLASE"/>
    <property type="match status" value="1"/>
</dbReference>
<dbReference type="PANTHER" id="PTHR11902:SF1">
    <property type="entry name" value="ENOLASE"/>
    <property type="match status" value="1"/>
</dbReference>
<dbReference type="Pfam" id="PF00113">
    <property type="entry name" value="Enolase_C"/>
    <property type="match status" value="1"/>
</dbReference>
<dbReference type="Pfam" id="PF03952">
    <property type="entry name" value="Enolase_N"/>
    <property type="match status" value="1"/>
</dbReference>
<dbReference type="PIRSF" id="PIRSF001400">
    <property type="entry name" value="Enolase"/>
    <property type="match status" value="1"/>
</dbReference>
<dbReference type="PRINTS" id="PR00148">
    <property type="entry name" value="ENOLASE"/>
</dbReference>
<dbReference type="SFLD" id="SFLDS00001">
    <property type="entry name" value="Enolase"/>
    <property type="match status" value="1"/>
</dbReference>
<dbReference type="SFLD" id="SFLDF00002">
    <property type="entry name" value="enolase"/>
    <property type="match status" value="1"/>
</dbReference>
<dbReference type="SMART" id="SM01192">
    <property type="entry name" value="Enolase_C"/>
    <property type="match status" value="1"/>
</dbReference>
<dbReference type="SMART" id="SM01193">
    <property type="entry name" value="Enolase_N"/>
    <property type="match status" value="1"/>
</dbReference>
<dbReference type="SUPFAM" id="SSF51604">
    <property type="entry name" value="Enolase C-terminal domain-like"/>
    <property type="match status" value="1"/>
</dbReference>
<dbReference type="SUPFAM" id="SSF54826">
    <property type="entry name" value="Enolase N-terminal domain-like"/>
    <property type="match status" value="1"/>
</dbReference>
<dbReference type="PROSITE" id="PS00164">
    <property type="entry name" value="ENOLASE"/>
    <property type="match status" value="1"/>
</dbReference>
<comment type="catalytic activity">
    <reaction>
        <text>(2R)-2-phosphoglycerate = phosphoenolpyruvate + H2O</text>
        <dbReference type="Rhea" id="RHEA:10164"/>
        <dbReference type="ChEBI" id="CHEBI:15377"/>
        <dbReference type="ChEBI" id="CHEBI:58289"/>
        <dbReference type="ChEBI" id="CHEBI:58702"/>
        <dbReference type="EC" id="4.2.1.11"/>
    </reaction>
</comment>
<comment type="cofactor">
    <cofactor evidence="1">
        <name>Mg(2+)</name>
        <dbReference type="ChEBI" id="CHEBI:18420"/>
    </cofactor>
    <text evidence="1">Mg(2+) is required for catalysis and for stabilizing the dimer.</text>
</comment>
<comment type="pathway">
    <text>Carbohydrate degradation; glycolysis; pyruvate from D-glyceraldehyde 3-phosphate: step 4/5.</text>
</comment>
<comment type="subunit">
    <text evidence="1">Homodimer.</text>
</comment>
<comment type="subcellular location">
    <subcellularLocation>
        <location evidence="1">Cytoplasm</location>
    </subcellularLocation>
</comment>
<comment type="similarity">
    <text evidence="2">Belongs to the enolase family.</text>
</comment>
<evidence type="ECO:0000250" key="1"/>
<evidence type="ECO:0000305" key="2"/>
<organism>
    <name type="scientific">Cunninghamella elegans</name>
    <dbReference type="NCBI Taxonomy" id="4853"/>
    <lineage>
        <taxon>Eukaryota</taxon>
        <taxon>Fungi</taxon>
        <taxon>Fungi incertae sedis</taxon>
        <taxon>Mucoromycota</taxon>
        <taxon>Mucoromycotina</taxon>
        <taxon>Mucoromycetes</taxon>
        <taxon>Mucorales</taxon>
        <taxon>Cunninghamellaceae</taxon>
        <taxon>Cunninghamella</taxon>
    </lineage>
</organism>
<reference key="1">
    <citation type="journal article" date="2000" name="Mycol. Res.">
        <title>Cloning, sequencing, and expression of the gene encoding enolase from a fungus, Cunninghamella elegans.</title>
        <authorList>
            <person name="Wang R.F."/>
            <person name="Khan A.F."/>
            <person name="Cao W.W."/>
            <person name="Cerniglia C.E."/>
        </authorList>
        <dbReference type="AGRICOLA" id="IND22048504"/>
    </citation>
    <scope>NUCLEOTIDE SEQUENCE [MRNA]</scope>
    <source>
        <strain>ATCC 36112 / DSM 8217 / PA-1</strain>
    </source>
</reference>
<protein>
    <recommendedName>
        <fullName>Enolase</fullName>
        <ecNumber>4.2.1.11</ecNumber>
    </recommendedName>
    <alternativeName>
        <fullName>2-phospho-D-glycerate hydro-lyase</fullName>
    </alternativeName>
    <alternativeName>
        <fullName>2-phosphoglycerate dehydratase</fullName>
    </alternativeName>
</protein>
<feature type="chain" id="PRO_0000134048" description="Enolase">
    <location>
        <begin position="1" status="less than"/>
        <end position="436"/>
    </location>
</feature>
<feature type="active site" description="Proton donor" evidence="1">
    <location>
        <position position="211"/>
    </location>
</feature>
<feature type="active site" description="Proton acceptor" evidence="1">
    <location>
        <position position="345"/>
    </location>
</feature>
<feature type="binding site" evidence="1">
    <location>
        <position position="159"/>
    </location>
    <ligand>
        <name>substrate</name>
    </ligand>
</feature>
<feature type="binding site" evidence="1">
    <location>
        <position position="168"/>
    </location>
    <ligand>
        <name>substrate</name>
    </ligand>
</feature>
<feature type="binding site" evidence="1">
    <location>
        <position position="246"/>
    </location>
    <ligand>
        <name>Mg(2+)</name>
        <dbReference type="ChEBI" id="CHEBI:18420"/>
    </ligand>
</feature>
<feature type="binding site" evidence="1">
    <location>
        <position position="295"/>
    </location>
    <ligand>
        <name>Mg(2+)</name>
        <dbReference type="ChEBI" id="CHEBI:18420"/>
    </ligand>
</feature>
<feature type="binding site" evidence="1">
    <location>
        <position position="295"/>
    </location>
    <ligand>
        <name>substrate</name>
    </ligand>
</feature>
<feature type="binding site" evidence="1">
    <location>
        <position position="320"/>
    </location>
    <ligand>
        <name>Mg(2+)</name>
        <dbReference type="ChEBI" id="CHEBI:18420"/>
    </ligand>
</feature>
<feature type="binding site" evidence="1">
    <location>
        <position position="320"/>
    </location>
    <ligand>
        <name>substrate</name>
    </ligand>
</feature>
<feature type="binding site" evidence="1">
    <location>
        <begin position="372"/>
        <end position="375"/>
    </location>
    <ligand>
        <name>substrate</name>
    </ligand>
</feature>
<feature type="binding site" evidence="1">
    <location>
        <position position="396"/>
    </location>
    <ligand>
        <name>substrate</name>
    </ligand>
</feature>
<feature type="non-terminal residue">
    <location>
        <position position="1"/>
    </location>
</feature>
<proteinExistence type="evidence at transcript level"/>